<protein>
    <recommendedName>
        <fullName evidence="1">Glutamyl-tRNA(Gln) amidotransferase subunit A</fullName>
        <shortName evidence="1">Glu-ADT subunit A</shortName>
        <ecNumber evidence="1">6.3.5.7</ecNumber>
    </recommendedName>
</protein>
<accession>Q3AKH0</accession>
<name>GATA_SYNSC</name>
<gene>
    <name evidence="1" type="primary">gatA</name>
    <name type="ordered locus">Syncc9605_1157</name>
</gene>
<comment type="function">
    <text evidence="1">Allows the formation of correctly charged Gln-tRNA(Gln) through the transamidation of misacylated Glu-tRNA(Gln) in organisms which lack glutaminyl-tRNA synthetase. The reaction takes place in the presence of glutamine and ATP through an activated gamma-phospho-Glu-tRNA(Gln).</text>
</comment>
<comment type="catalytic activity">
    <reaction evidence="1">
        <text>L-glutamyl-tRNA(Gln) + L-glutamine + ATP + H2O = L-glutaminyl-tRNA(Gln) + L-glutamate + ADP + phosphate + H(+)</text>
        <dbReference type="Rhea" id="RHEA:17521"/>
        <dbReference type="Rhea" id="RHEA-COMP:9681"/>
        <dbReference type="Rhea" id="RHEA-COMP:9684"/>
        <dbReference type="ChEBI" id="CHEBI:15377"/>
        <dbReference type="ChEBI" id="CHEBI:15378"/>
        <dbReference type="ChEBI" id="CHEBI:29985"/>
        <dbReference type="ChEBI" id="CHEBI:30616"/>
        <dbReference type="ChEBI" id="CHEBI:43474"/>
        <dbReference type="ChEBI" id="CHEBI:58359"/>
        <dbReference type="ChEBI" id="CHEBI:78520"/>
        <dbReference type="ChEBI" id="CHEBI:78521"/>
        <dbReference type="ChEBI" id="CHEBI:456216"/>
        <dbReference type="EC" id="6.3.5.7"/>
    </reaction>
</comment>
<comment type="subunit">
    <text evidence="1">Heterotrimer of A, B and C subunits.</text>
</comment>
<comment type="similarity">
    <text evidence="1">Belongs to the amidase family. GatA subfamily.</text>
</comment>
<dbReference type="EC" id="6.3.5.7" evidence="1"/>
<dbReference type="EMBL" id="CP000110">
    <property type="protein sequence ID" value="ABB34912.1"/>
    <property type="molecule type" value="Genomic_DNA"/>
</dbReference>
<dbReference type="RefSeq" id="WP_011364133.1">
    <property type="nucleotide sequence ID" value="NC_007516.1"/>
</dbReference>
<dbReference type="SMR" id="Q3AKH0"/>
<dbReference type="STRING" id="110662.Syncc9605_1157"/>
<dbReference type="KEGG" id="syd:Syncc9605_1157"/>
<dbReference type="eggNOG" id="COG0154">
    <property type="taxonomic scope" value="Bacteria"/>
</dbReference>
<dbReference type="HOGENOM" id="CLU_009600_0_3_3"/>
<dbReference type="OrthoDB" id="9811471at2"/>
<dbReference type="GO" id="GO:0030956">
    <property type="term" value="C:glutamyl-tRNA(Gln) amidotransferase complex"/>
    <property type="evidence" value="ECO:0007669"/>
    <property type="project" value="InterPro"/>
</dbReference>
<dbReference type="GO" id="GO:0005524">
    <property type="term" value="F:ATP binding"/>
    <property type="evidence" value="ECO:0007669"/>
    <property type="project" value="UniProtKB-KW"/>
</dbReference>
<dbReference type="GO" id="GO:0050567">
    <property type="term" value="F:glutaminyl-tRNA synthase (glutamine-hydrolyzing) activity"/>
    <property type="evidence" value="ECO:0007669"/>
    <property type="project" value="UniProtKB-UniRule"/>
</dbReference>
<dbReference type="GO" id="GO:0006412">
    <property type="term" value="P:translation"/>
    <property type="evidence" value="ECO:0007669"/>
    <property type="project" value="UniProtKB-UniRule"/>
</dbReference>
<dbReference type="Gene3D" id="3.90.1300.10">
    <property type="entry name" value="Amidase signature (AS) domain"/>
    <property type="match status" value="1"/>
</dbReference>
<dbReference type="HAMAP" id="MF_00120">
    <property type="entry name" value="GatA"/>
    <property type="match status" value="1"/>
</dbReference>
<dbReference type="InterPro" id="IPR000120">
    <property type="entry name" value="Amidase"/>
</dbReference>
<dbReference type="InterPro" id="IPR020556">
    <property type="entry name" value="Amidase_CS"/>
</dbReference>
<dbReference type="InterPro" id="IPR023631">
    <property type="entry name" value="Amidase_dom"/>
</dbReference>
<dbReference type="InterPro" id="IPR036928">
    <property type="entry name" value="AS_sf"/>
</dbReference>
<dbReference type="InterPro" id="IPR004412">
    <property type="entry name" value="GatA"/>
</dbReference>
<dbReference type="NCBIfam" id="TIGR00132">
    <property type="entry name" value="gatA"/>
    <property type="match status" value="1"/>
</dbReference>
<dbReference type="PANTHER" id="PTHR11895:SF151">
    <property type="entry name" value="GLUTAMYL-TRNA(GLN) AMIDOTRANSFERASE SUBUNIT A"/>
    <property type="match status" value="1"/>
</dbReference>
<dbReference type="PANTHER" id="PTHR11895">
    <property type="entry name" value="TRANSAMIDASE"/>
    <property type="match status" value="1"/>
</dbReference>
<dbReference type="Pfam" id="PF01425">
    <property type="entry name" value="Amidase"/>
    <property type="match status" value="1"/>
</dbReference>
<dbReference type="PIRSF" id="PIRSF001221">
    <property type="entry name" value="Amidase_fungi"/>
    <property type="match status" value="1"/>
</dbReference>
<dbReference type="SUPFAM" id="SSF75304">
    <property type="entry name" value="Amidase signature (AS) enzymes"/>
    <property type="match status" value="1"/>
</dbReference>
<dbReference type="PROSITE" id="PS00571">
    <property type="entry name" value="AMIDASES"/>
    <property type="match status" value="1"/>
</dbReference>
<feature type="chain" id="PRO_0000241169" description="Glutamyl-tRNA(Gln) amidotransferase subunit A">
    <location>
        <begin position="1"/>
        <end position="491"/>
    </location>
</feature>
<feature type="active site" description="Charge relay system" evidence="1">
    <location>
        <position position="79"/>
    </location>
</feature>
<feature type="active site" description="Charge relay system" evidence="1">
    <location>
        <position position="154"/>
    </location>
</feature>
<feature type="active site" description="Acyl-ester intermediate" evidence="1">
    <location>
        <position position="178"/>
    </location>
</feature>
<keyword id="KW-0067">ATP-binding</keyword>
<keyword id="KW-0436">Ligase</keyword>
<keyword id="KW-0547">Nucleotide-binding</keyword>
<keyword id="KW-0648">Protein biosynthesis</keyword>
<organism>
    <name type="scientific">Synechococcus sp. (strain CC9605)</name>
    <dbReference type="NCBI Taxonomy" id="110662"/>
    <lineage>
        <taxon>Bacteria</taxon>
        <taxon>Bacillati</taxon>
        <taxon>Cyanobacteriota</taxon>
        <taxon>Cyanophyceae</taxon>
        <taxon>Synechococcales</taxon>
        <taxon>Synechococcaceae</taxon>
        <taxon>Synechococcus</taxon>
    </lineage>
</organism>
<sequence>MDRRDMTISAWRQQLQSGEVSSRELVDQHLKRLESSEPSLNAFVEVTADQARAEASRIDEARAAGEALGPLAGLPLAIKDNLCTKGVRTTCSSRMLEQFVPPYESTVTERLWQAGGVLVGKTNLDEFAMGGSTETSAFGATQNPWNTAHVPGGSSGGSAAAVAAGSCVASLGSDTGGSIRQPASFCGVVGLKPTYGRVSRWGLVAFASSLDQVGPFAGSVADVAELLQVIAGPDPRDSTCLDAAVPVFSDGLSQSIKGLKVGLIKECFDAEGLDPEVKASVQASAAQLEALGAELVEVSCPRFNDGIATYYVIAPSEASANLARYDGVKYGFRAEDAESLAAMTARSRAEAFGAEVQRRILIGTYALSAGYVDAYYKKAQQVRTLIRRDFDAAFKSVDVLLTPTAPSTAFKAGAHADDPLAMYLADLLTIPVNLAGLPAISVPCGFSAAGLPIGMQLIGNVLDEPRLLQVAHQYEQAAQVFASRPEAALVP</sequence>
<proteinExistence type="inferred from homology"/>
<reference key="1">
    <citation type="submission" date="2005-07" db="EMBL/GenBank/DDBJ databases">
        <title>Complete sequence of Synechococcus sp. CC9605.</title>
        <authorList>
            <consortium name="US DOE Joint Genome Institute"/>
            <person name="Copeland A."/>
            <person name="Lucas S."/>
            <person name="Lapidus A."/>
            <person name="Barry K."/>
            <person name="Detter J.C."/>
            <person name="Glavina T."/>
            <person name="Hammon N."/>
            <person name="Israni S."/>
            <person name="Pitluck S."/>
            <person name="Schmutz J."/>
            <person name="Martinez M."/>
            <person name="Larimer F."/>
            <person name="Land M."/>
            <person name="Kyrpides N."/>
            <person name="Ivanova N."/>
            <person name="Richardson P."/>
        </authorList>
    </citation>
    <scope>NUCLEOTIDE SEQUENCE [LARGE SCALE GENOMIC DNA]</scope>
    <source>
        <strain>CC9605</strain>
    </source>
</reference>
<evidence type="ECO:0000255" key="1">
    <source>
        <dbReference type="HAMAP-Rule" id="MF_00120"/>
    </source>
</evidence>